<name>RL19_BACMK</name>
<sequence length="114" mass="13183">MQQLITEITKGQLKTDLPSFRPGDTLRVHVKVVEGTRERIQLFEGVVIKRRGGGISETFTVRKISYGVGVERTFPVHTPRIANIEVLRRGKVRRAKLYYLRNLRGKKARIKEIR</sequence>
<accession>A9VT78</accession>
<reference key="1">
    <citation type="journal article" date="2008" name="Chem. Biol. Interact.">
        <title>Extending the Bacillus cereus group genomics to putative food-borne pathogens of different toxicity.</title>
        <authorList>
            <person name="Lapidus A."/>
            <person name="Goltsman E."/>
            <person name="Auger S."/>
            <person name="Galleron N."/>
            <person name="Segurens B."/>
            <person name="Dossat C."/>
            <person name="Land M.L."/>
            <person name="Broussolle V."/>
            <person name="Brillard J."/>
            <person name="Guinebretiere M.-H."/>
            <person name="Sanchis V."/>
            <person name="Nguen-the C."/>
            <person name="Lereclus D."/>
            <person name="Richardson P."/>
            <person name="Wincker P."/>
            <person name="Weissenbach J."/>
            <person name="Ehrlich S.D."/>
            <person name="Sorokin A."/>
        </authorList>
    </citation>
    <scope>NUCLEOTIDE SEQUENCE [LARGE SCALE GENOMIC DNA]</scope>
    <source>
        <strain>KBAB4</strain>
    </source>
</reference>
<protein>
    <recommendedName>
        <fullName evidence="1">Large ribosomal subunit protein bL19</fullName>
    </recommendedName>
    <alternativeName>
        <fullName evidence="2">50S ribosomal protein L19</fullName>
    </alternativeName>
</protein>
<keyword id="KW-0687">Ribonucleoprotein</keyword>
<keyword id="KW-0689">Ribosomal protein</keyword>
<evidence type="ECO:0000255" key="1">
    <source>
        <dbReference type="HAMAP-Rule" id="MF_00402"/>
    </source>
</evidence>
<evidence type="ECO:0000305" key="2"/>
<organism>
    <name type="scientific">Bacillus mycoides (strain KBAB4)</name>
    <name type="common">Bacillus weihenstephanensis</name>
    <dbReference type="NCBI Taxonomy" id="315730"/>
    <lineage>
        <taxon>Bacteria</taxon>
        <taxon>Bacillati</taxon>
        <taxon>Bacillota</taxon>
        <taxon>Bacilli</taxon>
        <taxon>Bacillales</taxon>
        <taxon>Bacillaceae</taxon>
        <taxon>Bacillus</taxon>
        <taxon>Bacillus cereus group</taxon>
    </lineage>
</organism>
<gene>
    <name evidence="1" type="primary">rplS</name>
    <name type="ordered locus">BcerKBAB4_3663</name>
</gene>
<proteinExistence type="inferred from homology"/>
<dbReference type="EMBL" id="CP000903">
    <property type="protein sequence ID" value="ABY44834.1"/>
    <property type="molecule type" value="Genomic_DNA"/>
</dbReference>
<dbReference type="RefSeq" id="WP_002014524.1">
    <property type="nucleotide sequence ID" value="NZ_CAKMRX030000111.1"/>
</dbReference>
<dbReference type="SMR" id="A9VT78"/>
<dbReference type="GeneID" id="66266596"/>
<dbReference type="KEGG" id="bwe:BcerKBAB4_3663"/>
<dbReference type="eggNOG" id="COG0335">
    <property type="taxonomic scope" value="Bacteria"/>
</dbReference>
<dbReference type="HOGENOM" id="CLU_103507_2_1_9"/>
<dbReference type="Proteomes" id="UP000002154">
    <property type="component" value="Chromosome"/>
</dbReference>
<dbReference type="GO" id="GO:0022625">
    <property type="term" value="C:cytosolic large ribosomal subunit"/>
    <property type="evidence" value="ECO:0007669"/>
    <property type="project" value="TreeGrafter"/>
</dbReference>
<dbReference type="GO" id="GO:0003735">
    <property type="term" value="F:structural constituent of ribosome"/>
    <property type="evidence" value="ECO:0007669"/>
    <property type="project" value="InterPro"/>
</dbReference>
<dbReference type="GO" id="GO:0006412">
    <property type="term" value="P:translation"/>
    <property type="evidence" value="ECO:0007669"/>
    <property type="project" value="UniProtKB-UniRule"/>
</dbReference>
<dbReference type="FunFam" id="2.30.30.790:FF:000001">
    <property type="entry name" value="50S ribosomal protein L19"/>
    <property type="match status" value="1"/>
</dbReference>
<dbReference type="Gene3D" id="2.30.30.790">
    <property type="match status" value="1"/>
</dbReference>
<dbReference type="HAMAP" id="MF_00402">
    <property type="entry name" value="Ribosomal_bL19"/>
    <property type="match status" value="1"/>
</dbReference>
<dbReference type="InterPro" id="IPR001857">
    <property type="entry name" value="Ribosomal_bL19"/>
</dbReference>
<dbReference type="InterPro" id="IPR018257">
    <property type="entry name" value="Ribosomal_bL19_CS"/>
</dbReference>
<dbReference type="InterPro" id="IPR038657">
    <property type="entry name" value="Ribosomal_bL19_sf"/>
</dbReference>
<dbReference type="InterPro" id="IPR008991">
    <property type="entry name" value="Translation_prot_SH3-like_sf"/>
</dbReference>
<dbReference type="NCBIfam" id="TIGR01024">
    <property type="entry name" value="rplS_bact"/>
    <property type="match status" value="1"/>
</dbReference>
<dbReference type="PANTHER" id="PTHR15680:SF9">
    <property type="entry name" value="LARGE RIBOSOMAL SUBUNIT PROTEIN BL19M"/>
    <property type="match status" value="1"/>
</dbReference>
<dbReference type="PANTHER" id="PTHR15680">
    <property type="entry name" value="RIBOSOMAL PROTEIN L19"/>
    <property type="match status" value="1"/>
</dbReference>
<dbReference type="Pfam" id="PF01245">
    <property type="entry name" value="Ribosomal_L19"/>
    <property type="match status" value="1"/>
</dbReference>
<dbReference type="PIRSF" id="PIRSF002191">
    <property type="entry name" value="Ribosomal_L19"/>
    <property type="match status" value="1"/>
</dbReference>
<dbReference type="PRINTS" id="PR00061">
    <property type="entry name" value="RIBOSOMALL19"/>
</dbReference>
<dbReference type="SUPFAM" id="SSF50104">
    <property type="entry name" value="Translation proteins SH3-like domain"/>
    <property type="match status" value="1"/>
</dbReference>
<dbReference type="PROSITE" id="PS01015">
    <property type="entry name" value="RIBOSOMAL_L19"/>
    <property type="match status" value="1"/>
</dbReference>
<feature type="chain" id="PRO_1000193793" description="Large ribosomal subunit protein bL19">
    <location>
        <begin position="1"/>
        <end position="114"/>
    </location>
</feature>
<comment type="function">
    <text evidence="1">This protein is located at the 30S-50S ribosomal subunit interface and may play a role in the structure and function of the aminoacyl-tRNA binding site.</text>
</comment>
<comment type="similarity">
    <text evidence="1">Belongs to the bacterial ribosomal protein bL19 family.</text>
</comment>